<protein>
    <recommendedName>
        <fullName evidence="1">RNA pyrophosphohydrolase</fullName>
        <ecNumber evidence="1">3.6.1.-</ecNumber>
    </recommendedName>
    <alternativeName>
        <fullName evidence="1">(Di)nucleoside polyphosphate hydrolase</fullName>
    </alternativeName>
</protein>
<gene>
    <name evidence="1" type="primary">rppH</name>
    <name evidence="1" type="synonym">nudH</name>
    <name type="ordered locus">Smlt4299</name>
</gene>
<keyword id="KW-0378">Hydrolase</keyword>
<keyword id="KW-1185">Reference proteome</keyword>
<sequence length="206" mass="23703">MIDPDGYRPNVGIVLMRQDGQVFWARRVRRDGWQFPQGGMNTDETPVEAMYRELQEETGLLPEHVEVLGATPGWLRYKLPARAIRRNERQVCIGQKQVWFLLRLTGDESHVKLDHTDSPEFDHWRWVDFWYPVEHVVMFKRGVYARALRHLAPLARGVAGQGVTAMPKSAAEAWMPGHTAGHDRPRKRPRTRGYWPKKATGDGPAS</sequence>
<comment type="function">
    <text evidence="1">Accelerates the degradation of transcripts by removing pyrophosphate from the 5'-end of triphosphorylated RNA, leading to a more labile monophosphorylated state that can stimulate subsequent ribonuclease cleavage.</text>
</comment>
<comment type="cofactor">
    <cofactor evidence="1">
        <name>a divalent metal cation</name>
        <dbReference type="ChEBI" id="CHEBI:60240"/>
    </cofactor>
</comment>
<comment type="similarity">
    <text evidence="1">Belongs to the Nudix hydrolase family. RppH subfamily.</text>
</comment>
<proteinExistence type="inferred from homology"/>
<feature type="chain" id="PRO_1000115302" description="RNA pyrophosphohydrolase">
    <location>
        <begin position="1"/>
        <end position="206"/>
    </location>
</feature>
<feature type="domain" description="Nudix hydrolase" evidence="1">
    <location>
        <begin position="6"/>
        <end position="149"/>
    </location>
</feature>
<feature type="region of interest" description="Disordered" evidence="2">
    <location>
        <begin position="175"/>
        <end position="206"/>
    </location>
</feature>
<feature type="short sequence motif" description="Nudix box">
    <location>
        <begin position="38"/>
        <end position="59"/>
    </location>
</feature>
<dbReference type="EC" id="3.6.1.-" evidence="1"/>
<dbReference type="EMBL" id="AM743169">
    <property type="protein sequence ID" value="CAQ47685.1"/>
    <property type="molecule type" value="Genomic_DNA"/>
</dbReference>
<dbReference type="RefSeq" id="WP_005411310.1">
    <property type="nucleotide sequence ID" value="NC_010943.1"/>
</dbReference>
<dbReference type="SMR" id="B2FJU2"/>
<dbReference type="EnsemblBacteria" id="CAQ47685">
    <property type="protein sequence ID" value="CAQ47685"/>
    <property type="gene ID" value="Smlt4299"/>
</dbReference>
<dbReference type="KEGG" id="sml:Smlt4299"/>
<dbReference type="eggNOG" id="COG1051">
    <property type="taxonomic scope" value="Bacteria"/>
</dbReference>
<dbReference type="HOGENOM" id="CLU_087195_3_1_6"/>
<dbReference type="Proteomes" id="UP000008840">
    <property type="component" value="Chromosome"/>
</dbReference>
<dbReference type="GO" id="GO:0016462">
    <property type="term" value="F:pyrophosphatase activity"/>
    <property type="evidence" value="ECO:0007669"/>
    <property type="project" value="UniProtKB-ARBA"/>
</dbReference>
<dbReference type="CDD" id="cd03671">
    <property type="entry name" value="NUDIX_Ap4A_hydrolase_plant_like"/>
    <property type="match status" value="1"/>
</dbReference>
<dbReference type="FunFam" id="3.90.79.10:FF:000001">
    <property type="entry name" value="RNA pyrophosphohydrolase"/>
    <property type="match status" value="1"/>
</dbReference>
<dbReference type="Gene3D" id="3.90.79.10">
    <property type="entry name" value="Nucleoside Triphosphate Pyrophosphohydrolase"/>
    <property type="match status" value="1"/>
</dbReference>
<dbReference type="HAMAP" id="MF_00298">
    <property type="entry name" value="Nudix_RppH"/>
    <property type="match status" value="1"/>
</dbReference>
<dbReference type="InterPro" id="IPR015797">
    <property type="entry name" value="NUDIX_hydrolase-like_dom_sf"/>
</dbReference>
<dbReference type="InterPro" id="IPR020084">
    <property type="entry name" value="NUDIX_hydrolase_CS"/>
</dbReference>
<dbReference type="InterPro" id="IPR000086">
    <property type="entry name" value="NUDIX_hydrolase_dom"/>
</dbReference>
<dbReference type="InterPro" id="IPR022927">
    <property type="entry name" value="RppH"/>
</dbReference>
<dbReference type="NCBIfam" id="NF001937">
    <property type="entry name" value="PRK00714.1-4"/>
    <property type="match status" value="1"/>
</dbReference>
<dbReference type="NCBIfam" id="NF001938">
    <property type="entry name" value="PRK00714.1-5"/>
    <property type="match status" value="1"/>
</dbReference>
<dbReference type="PANTHER" id="PTHR43736">
    <property type="entry name" value="ADP-RIBOSE PYROPHOSPHATASE"/>
    <property type="match status" value="1"/>
</dbReference>
<dbReference type="PANTHER" id="PTHR43736:SF1">
    <property type="entry name" value="DIHYDRONEOPTERIN TRIPHOSPHATE DIPHOSPHATASE"/>
    <property type="match status" value="1"/>
</dbReference>
<dbReference type="Pfam" id="PF00293">
    <property type="entry name" value="NUDIX"/>
    <property type="match status" value="1"/>
</dbReference>
<dbReference type="SUPFAM" id="SSF55811">
    <property type="entry name" value="Nudix"/>
    <property type="match status" value="1"/>
</dbReference>
<dbReference type="PROSITE" id="PS51462">
    <property type="entry name" value="NUDIX"/>
    <property type="match status" value="1"/>
</dbReference>
<dbReference type="PROSITE" id="PS00893">
    <property type="entry name" value="NUDIX_BOX"/>
    <property type="match status" value="1"/>
</dbReference>
<reference key="1">
    <citation type="journal article" date="2008" name="Genome Biol.">
        <title>The complete genome, comparative and functional analysis of Stenotrophomonas maltophilia reveals an organism heavily shielded by drug resistance determinants.</title>
        <authorList>
            <person name="Crossman L.C."/>
            <person name="Gould V.C."/>
            <person name="Dow J.M."/>
            <person name="Vernikos G.S."/>
            <person name="Okazaki A."/>
            <person name="Sebaihia M."/>
            <person name="Saunders D."/>
            <person name="Arrowsmith C."/>
            <person name="Carver T."/>
            <person name="Peters N."/>
            <person name="Adlem E."/>
            <person name="Kerhornou A."/>
            <person name="Lord A."/>
            <person name="Murphy L."/>
            <person name="Seeger K."/>
            <person name="Squares R."/>
            <person name="Rutter S."/>
            <person name="Quail M.A."/>
            <person name="Rajandream M.A."/>
            <person name="Harris D."/>
            <person name="Churcher C."/>
            <person name="Bentley S.D."/>
            <person name="Parkhill J."/>
            <person name="Thomson N.R."/>
            <person name="Avison M.B."/>
        </authorList>
    </citation>
    <scope>NUCLEOTIDE SEQUENCE [LARGE SCALE GENOMIC DNA]</scope>
    <source>
        <strain>K279a</strain>
    </source>
</reference>
<name>RPPH_STRMK</name>
<organism>
    <name type="scientific">Stenotrophomonas maltophilia (strain K279a)</name>
    <dbReference type="NCBI Taxonomy" id="522373"/>
    <lineage>
        <taxon>Bacteria</taxon>
        <taxon>Pseudomonadati</taxon>
        <taxon>Pseudomonadota</taxon>
        <taxon>Gammaproteobacteria</taxon>
        <taxon>Lysobacterales</taxon>
        <taxon>Lysobacteraceae</taxon>
        <taxon>Stenotrophomonas</taxon>
        <taxon>Stenotrophomonas maltophilia group</taxon>
    </lineage>
</organism>
<evidence type="ECO:0000255" key="1">
    <source>
        <dbReference type="HAMAP-Rule" id="MF_00298"/>
    </source>
</evidence>
<evidence type="ECO:0000256" key="2">
    <source>
        <dbReference type="SAM" id="MobiDB-lite"/>
    </source>
</evidence>
<accession>B2FJU2</accession>